<gene>
    <name type="primary">PFK1</name>
    <name type="ordered locus">KLLA0A05544g</name>
</gene>
<proteinExistence type="evidence at protein level"/>
<feature type="chain" id="PRO_0000112040" description="ATP-dependent 6-phosphofructokinase subunit alpha">
    <location>
        <begin position="1"/>
        <end position="992"/>
    </location>
</feature>
<feature type="region of interest" description="N-terminal catalytic PFK domain 1">
    <location>
        <begin position="1"/>
        <end position="558"/>
    </location>
</feature>
<feature type="region of interest" description="Interdomain linker">
    <location>
        <begin position="559"/>
        <end position="572"/>
    </location>
</feature>
<feature type="region of interest" description="C-terminal regulatory PFK domain 2">
    <location>
        <begin position="573"/>
        <end position="992"/>
    </location>
</feature>
<feature type="active site" description="Proton acceptor" evidence="1">
    <location>
        <position position="334"/>
    </location>
</feature>
<feature type="binding site" evidence="1">
    <location>
        <position position="193"/>
    </location>
    <ligand>
        <name>ATP</name>
        <dbReference type="ChEBI" id="CHEBI:30616"/>
    </ligand>
</feature>
<feature type="binding site" evidence="1">
    <location>
        <begin position="256"/>
        <end position="257"/>
    </location>
    <ligand>
        <name>ATP</name>
        <dbReference type="ChEBI" id="CHEBI:30616"/>
    </ligand>
</feature>
<feature type="binding site" evidence="1">
    <location>
        <begin position="286"/>
        <end position="289"/>
    </location>
    <ligand>
        <name>ATP</name>
        <dbReference type="ChEBI" id="CHEBI:30616"/>
    </ligand>
</feature>
<feature type="binding site" evidence="1">
    <location>
        <position position="287"/>
    </location>
    <ligand>
        <name>Mg(2+)</name>
        <dbReference type="ChEBI" id="CHEBI:18420"/>
        <note>catalytic</note>
    </ligand>
</feature>
<feature type="binding site" evidence="1">
    <location>
        <begin position="332"/>
        <end position="334"/>
    </location>
    <ligand>
        <name>beta-D-fructose 6-phosphate</name>
        <dbReference type="ChEBI" id="CHEBI:57634"/>
        <label>1</label>
        <note>ligand shared with subunit beta</note>
    </ligand>
</feature>
<feature type="binding site" evidence="1">
    <location>
        <position position="369"/>
    </location>
    <ligand>
        <name>beta-D-fructose 6-phosphate</name>
        <dbReference type="ChEBI" id="CHEBI:57634"/>
        <label>2</label>
        <note>ligand shared with subunit beta</note>
    </ligand>
</feature>
<feature type="binding site" evidence="1">
    <location>
        <begin position="376"/>
        <end position="378"/>
    </location>
    <ligand>
        <name>beta-D-fructose 6-phosphate</name>
        <dbReference type="ChEBI" id="CHEBI:57634"/>
        <label>1</label>
        <note>ligand shared with subunit beta</note>
    </ligand>
</feature>
<feature type="binding site" evidence="1">
    <location>
        <position position="433"/>
    </location>
    <ligand>
        <name>beta-D-fructose 6-phosphate</name>
        <dbReference type="ChEBI" id="CHEBI:57634"/>
        <label>1</label>
        <note>ligand shared with subunit beta</note>
    </ligand>
</feature>
<feature type="binding site" evidence="1">
    <location>
        <position position="460"/>
    </location>
    <ligand>
        <name>beta-D-fructose 6-phosphate</name>
        <dbReference type="ChEBI" id="CHEBI:57634"/>
        <label>2</label>
        <note>ligand shared with subunit beta</note>
    </ligand>
</feature>
<feature type="binding site" evidence="1">
    <location>
        <begin position="466"/>
        <end position="469"/>
    </location>
    <ligand>
        <name>beta-D-fructose 6-phosphate</name>
        <dbReference type="ChEBI" id="CHEBI:57634"/>
        <label>1</label>
        <note>ligand shared with subunit beta</note>
    </ligand>
</feature>
<feature type="binding site" evidence="1">
    <location>
        <position position="643"/>
    </location>
    <ligand>
        <name>beta-D-fructose 2,6-bisphosphate</name>
        <dbReference type="ChEBI" id="CHEBI:58579"/>
        <label>1</label>
        <note>allosteric activator; ligand shared with subunit beta</note>
    </ligand>
</feature>
<feature type="binding site" evidence="1">
    <location>
        <begin position="700"/>
        <end position="704"/>
    </location>
    <ligand>
        <name>beta-D-fructose 2,6-bisphosphate</name>
        <dbReference type="ChEBI" id="CHEBI:58579"/>
        <label>1</label>
        <note>allosteric activator; ligand shared with subunit beta</note>
    </ligand>
</feature>
<feature type="binding site" evidence="1">
    <location>
        <position position="738"/>
    </location>
    <ligand>
        <name>beta-D-fructose 2,6-bisphosphate</name>
        <dbReference type="ChEBI" id="CHEBI:58579"/>
        <label>2</label>
        <note>allosteric activator; ligand shared with subunit beta</note>
    </ligand>
</feature>
<feature type="binding site" evidence="1">
    <location>
        <begin position="745"/>
        <end position="747"/>
    </location>
    <ligand>
        <name>beta-D-fructose 2,6-bisphosphate</name>
        <dbReference type="ChEBI" id="CHEBI:58579"/>
        <label>1</label>
        <note>allosteric activator; ligand shared with subunit beta</note>
    </ligand>
</feature>
<feature type="binding site" evidence="1">
    <location>
        <position position="805"/>
    </location>
    <ligand>
        <name>beta-D-fructose 2,6-bisphosphate</name>
        <dbReference type="ChEBI" id="CHEBI:58579"/>
        <label>1</label>
        <note>allosteric activator; ligand shared with subunit beta</note>
    </ligand>
</feature>
<feature type="binding site" evidence="1">
    <location>
        <position position="831"/>
    </location>
    <ligand>
        <name>beta-D-fructose 2,6-bisphosphate</name>
        <dbReference type="ChEBI" id="CHEBI:58579"/>
        <label>2</label>
        <note>allosteric activator; ligand shared with subunit beta</note>
    </ligand>
</feature>
<feature type="binding site" evidence="1">
    <location>
        <begin position="837"/>
        <end position="840"/>
    </location>
    <ligand>
        <name>beta-D-fructose 2,6-bisphosphate</name>
        <dbReference type="ChEBI" id="CHEBI:58579"/>
        <label>1</label>
        <note>allosteric activator; ligand shared with subunit beta</note>
    </ligand>
</feature>
<feature type="binding site" evidence="1">
    <location>
        <position position="929"/>
    </location>
    <ligand>
        <name>beta-D-fructose 2,6-bisphosphate</name>
        <dbReference type="ChEBI" id="CHEBI:58579"/>
        <label>1</label>
        <note>allosteric activator; ligand shared with subunit beta</note>
    </ligand>
</feature>
<dbReference type="EC" id="2.7.1.11" evidence="1"/>
<dbReference type="EMBL" id="Z17315">
    <property type="protein sequence ID" value="CAA78963.1"/>
    <property type="molecule type" value="Genomic_DNA"/>
</dbReference>
<dbReference type="EMBL" id="CR382121">
    <property type="protein sequence ID" value="CAH02833.1"/>
    <property type="molecule type" value="Genomic_DNA"/>
</dbReference>
<dbReference type="PIR" id="S32902">
    <property type="entry name" value="S32902"/>
</dbReference>
<dbReference type="RefSeq" id="XP_451245.1">
    <property type="nucleotide sequence ID" value="XM_451245.1"/>
</dbReference>
<dbReference type="SMR" id="Q03215"/>
<dbReference type="FunCoup" id="Q03215">
    <property type="interactions" value="980"/>
</dbReference>
<dbReference type="STRING" id="284590.Q03215"/>
<dbReference type="PaxDb" id="284590-Q03215"/>
<dbReference type="KEGG" id="kla:KLLA0_A05544g"/>
<dbReference type="eggNOG" id="KOG2440">
    <property type="taxonomic scope" value="Eukaryota"/>
</dbReference>
<dbReference type="HOGENOM" id="CLU_011053_0_0_1"/>
<dbReference type="InParanoid" id="Q03215"/>
<dbReference type="OMA" id="WHNLGGS"/>
<dbReference type="SABIO-RK" id="Q03215"/>
<dbReference type="UniPathway" id="UPA00109">
    <property type="reaction ID" value="UER00182"/>
</dbReference>
<dbReference type="Proteomes" id="UP000000598">
    <property type="component" value="Chromosome A"/>
</dbReference>
<dbReference type="GO" id="GO:0005945">
    <property type="term" value="C:6-phosphofructokinase complex"/>
    <property type="evidence" value="ECO:0007669"/>
    <property type="project" value="TreeGrafter"/>
</dbReference>
<dbReference type="GO" id="GO:0005739">
    <property type="term" value="C:mitochondrion"/>
    <property type="evidence" value="ECO:0007669"/>
    <property type="project" value="TreeGrafter"/>
</dbReference>
<dbReference type="GO" id="GO:0003872">
    <property type="term" value="F:6-phosphofructokinase activity"/>
    <property type="evidence" value="ECO:0007669"/>
    <property type="project" value="UniProtKB-UniRule"/>
</dbReference>
<dbReference type="GO" id="GO:0016208">
    <property type="term" value="F:AMP binding"/>
    <property type="evidence" value="ECO:0007669"/>
    <property type="project" value="TreeGrafter"/>
</dbReference>
<dbReference type="GO" id="GO:0005524">
    <property type="term" value="F:ATP binding"/>
    <property type="evidence" value="ECO:0007669"/>
    <property type="project" value="UniProtKB-KW"/>
</dbReference>
<dbReference type="GO" id="GO:0070095">
    <property type="term" value="F:fructose-6-phosphate binding"/>
    <property type="evidence" value="ECO:0007669"/>
    <property type="project" value="TreeGrafter"/>
</dbReference>
<dbReference type="GO" id="GO:0042802">
    <property type="term" value="F:identical protein binding"/>
    <property type="evidence" value="ECO:0007669"/>
    <property type="project" value="TreeGrafter"/>
</dbReference>
<dbReference type="GO" id="GO:0046872">
    <property type="term" value="F:metal ion binding"/>
    <property type="evidence" value="ECO:0007669"/>
    <property type="project" value="UniProtKB-KW"/>
</dbReference>
<dbReference type="GO" id="GO:0048029">
    <property type="term" value="F:monosaccharide binding"/>
    <property type="evidence" value="ECO:0007669"/>
    <property type="project" value="TreeGrafter"/>
</dbReference>
<dbReference type="GO" id="GO:0061621">
    <property type="term" value="P:canonical glycolysis"/>
    <property type="evidence" value="ECO:0007669"/>
    <property type="project" value="TreeGrafter"/>
</dbReference>
<dbReference type="GO" id="GO:0030388">
    <property type="term" value="P:fructose 1,6-bisphosphate metabolic process"/>
    <property type="evidence" value="ECO:0007669"/>
    <property type="project" value="TreeGrafter"/>
</dbReference>
<dbReference type="GO" id="GO:0006002">
    <property type="term" value="P:fructose 6-phosphate metabolic process"/>
    <property type="evidence" value="ECO:0007669"/>
    <property type="project" value="InterPro"/>
</dbReference>
<dbReference type="CDD" id="cd00764">
    <property type="entry name" value="Eukaryotic_PFK"/>
    <property type="match status" value="1"/>
</dbReference>
<dbReference type="FunFam" id="3.40.50.450:FF:000010">
    <property type="entry name" value="ATP-dependent 6-phosphofructokinase"/>
    <property type="match status" value="1"/>
</dbReference>
<dbReference type="FunFam" id="3.40.50.460:FF:000007">
    <property type="entry name" value="ATP-dependent 6-phosphofructokinase"/>
    <property type="match status" value="1"/>
</dbReference>
<dbReference type="FunFam" id="3.40.50.460:FF:000008">
    <property type="entry name" value="ATP-dependent 6-phosphofructokinase"/>
    <property type="match status" value="1"/>
</dbReference>
<dbReference type="Gene3D" id="3.10.180.90">
    <property type="match status" value="1"/>
</dbReference>
<dbReference type="Gene3D" id="3.40.50.450">
    <property type="match status" value="2"/>
</dbReference>
<dbReference type="Gene3D" id="3.40.50.460">
    <property type="entry name" value="Phosphofructokinase domain"/>
    <property type="match status" value="2"/>
</dbReference>
<dbReference type="HAMAP" id="MF_03184">
    <property type="entry name" value="Phosphofructokinase_I_E"/>
    <property type="match status" value="1"/>
</dbReference>
<dbReference type="InterPro" id="IPR009161">
    <property type="entry name" value="6-Pfructokinase_euk"/>
</dbReference>
<dbReference type="InterPro" id="IPR022953">
    <property type="entry name" value="ATP_PFK"/>
</dbReference>
<dbReference type="InterPro" id="IPR040712">
    <property type="entry name" value="Pfk_N"/>
</dbReference>
<dbReference type="InterPro" id="IPR041914">
    <property type="entry name" value="PFK_vert-type"/>
</dbReference>
<dbReference type="InterPro" id="IPR015912">
    <property type="entry name" value="Phosphofructokinase_CS"/>
</dbReference>
<dbReference type="InterPro" id="IPR000023">
    <property type="entry name" value="Phosphofructokinase_dom"/>
</dbReference>
<dbReference type="InterPro" id="IPR035966">
    <property type="entry name" value="PKF_sf"/>
</dbReference>
<dbReference type="NCBIfam" id="TIGR02478">
    <property type="entry name" value="6PF1K_euk"/>
    <property type="match status" value="1"/>
</dbReference>
<dbReference type="PANTHER" id="PTHR13697:SF57">
    <property type="entry name" value="ATP-DEPENDENT 6-PHOSPHOFRUCTOKINASE SUBUNIT ALPHA"/>
    <property type="match status" value="1"/>
</dbReference>
<dbReference type="PANTHER" id="PTHR13697">
    <property type="entry name" value="PHOSPHOFRUCTOKINASE"/>
    <property type="match status" value="1"/>
</dbReference>
<dbReference type="Pfam" id="PF00365">
    <property type="entry name" value="PFK"/>
    <property type="match status" value="2"/>
</dbReference>
<dbReference type="Pfam" id="PF18468">
    <property type="entry name" value="Pfk_N"/>
    <property type="match status" value="1"/>
</dbReference>
<dbReference type="PIRSF" id="PIRSF000533">
    <property type="entry name" value="ATP_PFK_euk"/>
    <property type="match status" value="1"/>
</dbReference>
<dbReference type="PRINTS" id="PR00476">
    <property type="entry name" value="PHFRCTKINASE"/>
</dbReference>
<dbReference type="SUPFAM" id="SSF53784">
    <property type="entry name" value="Phosphofructokinase"/>
    <property type="match status" value="2"/>
</dbReference>
<dbReference type="PROSITE" id="PS00433">
    <property type="entry name" value="PHOSPHOFRUCTOKINASE"/>
    <property type="match status" value="2"/>
</dbReference>
<reference key="1">
    <citation type="journal article" date="1993" name="Mol. Microbiol.">
        <title>Molecular genetics of phosphofructokinase in the yeast Kluyveromyces lactis.</title>
        <authorList>
            <person name="Heinisch J.J."/>
            <person name="Kirchrath L."/>
            <person name="Liesen T."/>
            <person name="Vogelsang K."/>
            <person name="Hollenberg C.P."/>
        </authorList>
    </citation>
    <scope>NUCLEOTIDE SEQUENCE [GENOMIC DNA]</scope>
    <scope>CHARACTERIZATION</scope>
</reference>
<reference key="2">
    <citation type="journal article" date="2004" name="Nature">
        <title>Genome evolution in yeasts.</title>
        <authorList>
            <person name="Dujon B."/>
            <person name="Sherman D."/>
            <person name="Fischer G."/>
            <person name="Durrens P."/>
            <person name="Casaregola S."/>
            <person name="Lafontaine I."/>
            <person name="de Montigny J."/>
            <person name="Marck C."/>
            <person name="Neuveglise C."/>
            <person name="Talla E."/>
            <person name="Goffard N."/>
            <person name="Frangeul L."/>
            <person name="Aigle M."/>
            <person name="Anthouard V."/>
            <person name="Babour A."/>
            <person name="Barbe V."/>
            <person name="Barnay S."/>
            <person name="Blanchin S."/>
            <person name="Beckerich J.-M."/>
            <person name="Beyne E."/>
            <person name="Bleykasten C."/>
            <person name="Boisrame A."/>
            <person name="Boyer J."/>
            <person name="Cattolico L."/>
            <person name="Confanioleri F."/>
            <person name="de Daruvar A."/>
            <person name="Despons L."/>
            <person name="Fabre E."/>
            <person name="Fairhead C."/>
            <person name="Ferry-Dumazet H."/>
            <person name="Groppi A."/>
            <person name="Hantraye F."/>
            <person name="Hennequin C."/>
            <person name="Jauniaux N."/>
            <person name="Joyet P."/>
            <person name="Kachouri R."/>
            <person name="Kerrest A."/>
            <person name="Koszul R."/>
            <person name="Lemaire M."/>
            <person name="Lesur I."/>
            <person name="Ma L."/>
            <person name="Muller H."/>
            <person name="Nicaud J.-M."/>
            <person name="Nikolski M."/>
            <person name="Oztas S."/>
            <person name="Ozier-Kalogeropoulos O."/>
            <person name="Pellenz S."/>
            <person name="Potier S."/>
            <person name="Richard G.-F."/>
            <person name="Straub M.-L."/>
            <person name="Suleau A."/>
            <person name="Swennen D."/>
            <person name="Tekaia F."/>
            <person name="Wesolowski-Louvel M."/>
            <person name="Westhof E."/>
            <person name="Wirth B."/>
            <person name="Zeniou-Meyer M."/>
            <person name="Zivanovic Y."/>
            <person name="Bolotin-Fukuhara M."/>
            <person name="Thierry A."/>
            <person name="Bouchier C."/>
            <person name="Caudron B."/>
            <person name="Scarpelli C."/>
            <person name="Gaillardin C."/>
            <person name="Weissenbach J."/>
            <person name="Wincker P."/>
            <person name="Souciet J.-L."/>
        </authorList>
    </citation>
    <scope>NUCLEOTIDE SEQUENCE [LARGE SCALE GENOMIC DNA]</scope>
    <source>
        <strain>ATCC 8585 / CBS 2359 / DSM 70799 / NBRC 1267 / NRRL Y-1140 / WM37</strain>
    </source>
</reference>
<protein>
    <recommendedName>
        <fullName evidence="1">ATP-dependent 6-phosphofructokinase subunit alpha</fullName>
        <shortName evidence="1">ATP-PFK 1</shortName>
        <shortName evidence="1">Phosphofructokinase 1</shortName>
        <ecNumber evidence="1">2.7.1.11</ecNumber>
    </recommendedName>
    <alternativeName>
        <fullName evidence="1">Phosphohexokinase 1</fullName>
    </alternativeName>
</protein>
<comment type="function">
    <text evidence="1">Catalyzes the phosphorylation of D-fructose 6-phosphate to fructose 1,6-bisphosphate by ATP, the first committing step of glycolysis.</text>
</comment>
<comment type="catalytic activity">
    <reaction evidence="1">
        <text>beta-D-fructose 6-phosphate + ATP = beta-D-fructose 1,6-bisphosphate + ADP + H(+)</text>
        <dbReference type="Rhea" id="RHEA:16109"/>
        <dbReference type="ChEBI" id="CHEBI:15378"/>
        <dbReference type="ChEBI" id="CHEBI:30616"/>
        <dbReference type="ChEBI" id="CHEBI:32966"/>
        <dbReference type="ChEBI" id="CHEBI:57634"/>
        <dbReference type="ChEBI" id="CHEBI:456216"/>
        <dbReference type="EC" id="2.7.1.11"/>
    </reaction>
</comment>
<comment type="cofactor">
    <cofactor evidence="1">
        <name>Mg(2+)</name>
        <dbReference type="ChEBI" id="CHEBI:18420"/>
    </cofactor>
</comment>
<comment type="activity regulation">
    <text evidence="1">Allosterically activated by ADP, AMP, or fructose 2,6-bisphosphate, and allosterically inhibited by ATP or citrate.</text>
</comment>
<comment type="pathway">
    <text evidence="1">Carbohydrate degradation; glycolysis; D-glyceraldehyde 3-phosphate and glycerone phosphate from D-glucose: step 3/4.</text>
</comment>
<comment type="subunit">
    <text>Heterooctamer of 4 alpha and 4 beta chains.</text>
</comment>
<comment type="subcellular location">
    <subcellularLocation>
        <location evidence="1">Cytoplasm</location>
    </subcellularLocation>
</comment>
<comment type="similarity">
    <text evidence="1">Belongs to the phosphofructokinase type A (PFKA) family. ATP-dependent PFK group I subfamily. Eukaryotic two domain clade 'E' sub-subfamily.</text>
</comment>
<keyword id="KW-0021">Allosteric enzyme</keyword>
<keyword id="KW-0067">ATP-binding</keyword>
<keyword id="KW-0963">Cytoplasm</keyword>
<keyword id="KW-0324">Glycolysis</keyword>
<keyword id="KW-0418">Kinase</keyword>
<keyword id="KW-0460">Magnesium</keyword>
<keyword id="KW-0479">Metal-binding</keyword>
<keyword id="KW-0547">Nucleotide-binding</keyword>
<keyword id="KW-1185">Reference proteome</keyword>
<keyword id="KW-0808">Transferase</keyword>
<organism>
    <name type="scientific">Kluyveromyces lactis (strain ATCC 8585 / CBS 2359 / DSM 70799 / NBRC 1267 / NRRL Y-1140 / WM37)</name>
    <name type="common">Yeast</name>
    <name type="synonym">Candida sphaerica</name>
    <dbReference type="NCBI Taxonomy" id="284590"/>
    <lineage>
        <taxon>Eukaryota</taxon>
        <taxon>Fungi</taxon>
        <taxon>Dikarya</taxon>
        <taxon>Ascomycota</taxon>
        <taxon>Saccharomycotina</taxon>
        <taxon>Saccharomycetes</taxon>
        <taxon>Saccharomycetales</taxon>
        <taxon>Saccharomycetaceae</taxon>
        <taxon>Kluyveromyces</taxon>
    </lineage>
</organism>
<evidence type="ECO:0000255" key="1">
    <source>
        <dbReference type="HAMAP-Rule" id="MF_03184"/>
    </source>
</evidence>
<sequence length="992" mass="109336">MNNSVYGVAFRSLSTGDEKLYKEATRFYHSLGFQTVKLYDNFKNHDDSNLIVGTSKNSVKECWLESFKLSELDSQGFRVPQQEASNQLQTDGVMIKLRLVDTEPLNQTADTVVYYTVSLDEVSKIGERVDDHNVKLVDPLGNVVLVTDSHDGKELNASEFIAPKDSSVEQKITVELVDKDSKKKKIAVMTSGGDSQGMNAAVRAVVRSSIYYGCDVYAVYEGYEGLVKGGDYLRKMEWKDVRGWLSEGGTLIGTARSKEFRERWGRKQACSNLIDQGIDALVVIGGDGSLTGADLFRSEWPSLVEELVKDGKFTEDEVALYQNLTIVGMVGSIDNDMSGTDSTIGAYSALERICEMVDYIDATAKSHSRAFVVEVMGRHCGWLGLMSGIATAADYIFIPERAAPHGKWQDELKRVCQRHREKGRRNNTVIVAEGALDDQLNPITAEQVKDVLVELGLDTKITTLGHVQRGGTAVAHDRWLATLQGVDAVKAILNMTPETPSPLIGILENKVIRMPLVESVKLTKQVAAAIEAKDFDKAISLRDTEFIELYSNFMSTTVNDDGSQLLPEADRLNIAIVHVGAPSAALNAATRAATLYCLAHGHRPYAITNGFSGLIQTGQVKELSWIDVEDWHNLGGSEIGTNRSVAAEDMGTIAYHFQKNKFDGVIILGGFEGFKSLKQLRDGRDQYPIFNIPMCLIPATVSNNVPGTEYSLGSDTCLNALVKYTDAIKQSASSTRRRVFVVEVQGGHSGYVASFTGLVTGAVSVYTPENAINLKTIQEDLALLKESFKHEQGETRNGKLVIRNEMASDVYTTELLADIITEQSNDRFGVRTAIPGHVQQGGVPSSKDRVIASRFAVKCVKFIEQWNKKNTAADNEDFKILRFNYVNGVKQYTVLDEDLSAAVICVNGSKISFKPIAHIWENETNIELRKGQEIHWEEYNEIGDILSGRSMLRRKIQKEQQEESSLPSVADTPLSSVTVSTSAAKEDSALYV</sequence>
<name>PFKA1_KLULA</name>
<accession>Q03215</accession>